<reference key="1">
    <citation type="journal article" date="1999" name="DNA Res.">
        <title>Complete genome sequence of an aerobic hyper-thermophilic crenarchaeon, Aeropyrum pernix K1.</title>
        <authorList>
            <person name="Kawarabayasi Y."/>
            <person name="Hino Y."/>
            <person name="Horikawa H."/>
            <person name="Yamazaki S."/>
            <person name="Haikawa Y."/>
            <person name="Jin-no K."/>
            <person name="Takahashi M."/>
            <person name="Sekine M."/>
            <person name="Baba S."/>
            <person name="Ankai A."/>
            <person name="Kosugi H."/>
            <person name="Hosoyama A."/>
            <person name="Fukui S."/>
            <person name="Nagai Y."/>
            <person name="Nishijima K."/>
            <person name="Nakazawa H."/>
            <person name="Takamiya M."/>
            <person name="Masuda S."/>
            <person name="Funahashi T."/>
            <person name="Tanaka T."/>
            <person name="Kudoh Y."/>
            <person name="Yamazaki J."/>
            <person name="Kushida N."/>
            <person name="Oguchi A."/>
            <person name="Aoki K."/>
            <person name="Kubota K."/>
            <person name="Nakamura Y."/>
            <person name="Nomura N."/>
            <person name="Sako Y."/>
            <person name="Kikuchi H."/>
        </authorList>
    </citation>
    <scope>NUCLEOTIDE SEQUENCE [LARGE SCALE GENOMIC DNA]</scope>
    <source>
        <strain>ATCC 700893 / DSM 11879 / JCM 9820 / NBRC 100138 / K1</strain>
    </source>
</reference>
<name>PDXS_AERPE</name>
<comment type="function">
    <text evidence="1">Catalyzes the formation of pyridoxal 5'-phosphate from ribose 5-phosphate (RBP), glyceraldehyde 3-phosphate (G3P) and ammonia. The ammonia is provided by the PdxT subunit. Can also use ribulose 5-phosphate and dihydroxyacetone phosphate as substrates, resulting from enzyme-catalyzed isomerization of RBP and G3P, respectively.</text>
</comment>
<comment type="catalytic activity">
    <reaction evidence="1">
        <text>aldehydo-D-ribose 5-phosphate + D-glyceraldehyde 3-phosphate + L-glutamine = pyridoxal 5'-phosphate + L-glutamate + phosphate + 3 H2O + H(+)</text>
        <dbReference type="Rhea" id="RHEA:31507"/>
        <dbReference type="ChEBI" id="CHEBI:15377"/>
        <dbReference type="ChEBI" id="CHEBI:15378"/>
        <dbReference type="ChEBI" id="CHEBI:29985"/>
        <dbReference type="ChEBI" id="CHEBI:43474"/>
        <dbReference type="ChEBI" id="CHEBI:58273"/>
        <dbReference type="ChEBI" id="CHEBI:58359"/>
        <dbReference type="ChEBI" id="CHEBI:59776"/>
        <dbReference type="ChEBI" id="CHEBI:597326"/>
        <dbReference type="EC" id="4.3.3.6"/>
    </reaction>
</comment>
<comment type="pathway">
    <text evidence="1">Cofactor biosynthesis; pyridoxal 5'-phosphate biosynthesis.</text>
</comment>
<comment type="subunit">
    <text evidence="1">In the presence of PdxT, forms a dodecamer of heterodimers.</text>
</comment>
<comment type="similarity">
    <text evidence="1">Belongs to the PdxS/SNZ family.</text>
</comment>
<comment type="sequence caution" evidence="2">
    <conflict type="erroneous initiation">
        <sequence resource="EMBL-CDS" id="BAA79159"/>
    </conflict>
</comment>
<organism>
    <name type="scientific">Aeropyrum pernix (strain ATCC 700893 / DSM 11879 / JCM 9820 / NBRC 100138 / K1)</name>
    <dbReference type="NCBI Taxonomy" id="272557"/>
    <lineage>
        <taxon>Archaea</taxon>
        <taxon>Thermoproteota</taxon>
        <taxon>Thermoprotei</taxon>
        <taxon>Desulfurococcales</taxon>
        <taxon>Desulfurococcaceae</taxon>
        <taxon>Aeropyrum</taxon>
    </lineage>
</organism>
<feature type="chain" id="PRO_0000109430" description="Pyridoxal 5'-phosphate synthase subunit PdxS">
    <location>
        <begin position="1"/>
        <end position="337"/>
    </location>
</feature>
<feature type="active site" description="Schiff-base intermediate with D-ribose 5-phosphate" evidence="1">
    <location>
        <position position="120"/>
    </location>
</feature>
<feature type="binding site" evidence="1">
    <location>
        <position position="63"/>
    </location>
    <ligand>
        <name>D-ribose 5-phosphate</name>
        <dbReference type="ChEBI" id="CHEBI:78346"/>
    </ligand>
</feature>
<feature type="binding site" evidence="1">
    <location>
        <position position="192"/>
    </location>
    <ligand>
        <name>D-ribose 5-phosphate</name>
        <dbReference type="ChEBI" id="CHEBI:78346"/>
    </ligand>
</feature>
<feature type="binding site" evidence="1">
    <location>
        <position position="204"/>
    </location>
    <ligand>
        <name>D-glyceraldehyde 3-phosphate</name>
        <dbReference type="ChEBI" id="CHEBI:59776"/>
    </ligand>
</feature>
<feature type="binding site" evidence="1">
    <location>
        <position position="253"/>
    </location>
    <ligand>
        <name>D-ribose 5-phosphate</name>
        <dbReference type="ChEBI" id="CHEBI:78346"/>
    </ligand>
</feature>
<feature type="binding site" evidence="1">
    <location>
        <begin position="274"/>
        <end position="275"/>
    </location>
    <ligand>
        <name>D-ribose 5-phosphate</name>
        <dbReference type="ChEBI" id="CHEBI:78346"/>
    </ligand>
</feature>
<sequence>MGFNEIVDFFYRLAEAGDKLREEGVWLAYGPEKLPEALEKPVNGTVAVKLGFPIYQKGGVVMDVTNVEQAGIAEDAGAVAVMVLDKLPYDVRKAGGVARMADVKVIEQVMSSITIPVMAKVRIGHYYEAMILESIGVDMIDESEVLTPVDEKHHINKWLFKVPFVNGARSLAEALRRIAEGASMIRTKGEAGTGNVAEAVRHMKLIMGDIWRLRGLSAEERLRVAREYGVPHQLVDLTARLGRLPVVNFAAGGIATPADAALMMWLGADGVFVGSGIFKSSDPSERAAAIVLATSMWDDPEAVAEAQRMVSEAKSMMGIDIRKLSPEELLQVRGAEA</sequence>
<proteinExistence type="inferred from homology"/>
<evidence type="ECO:0000255" key="1">
    <source>
        <dbReference type="HAMAP-Rule" id="MF_01824"/>
    </source>
</evidence>
<evidence type="ECO:0000305" key="2"/>
<keyword id="KW-0456">Lyase</keyword>
<keyword id="KW-0663">Pyridoxal phosphate</keyword>
<keyword id="KW-1185">Reference proteome</keyword>
<keyword id="KW-0704">Schiff base</keyword>
<protein>
    <recommendedName>
        <fullName evidence="1">Pyridoxal 5'-phosphate synthase subunit PdxS</fullName>
        <shortName evidence="1">PLP synthase subunit PdxS</shortName>
        <ecNumber evidence="1">4.3.3.6</ecNumber>
    </recommendedName>
    <alternativeName>
        <fullName evidence="1">Pdx1</fullName>
    </alternativeName>
</protein>
<accession>Q9YFK2</accession>
<dbReference type="EC" id="4.3.3.6" evidence="1"/>
<dbReference type="EMBL" id="BA000002">
    <property type="protein sequence ID" value="BAA79159.2"/>
    <property type="status" value="ALT_INIT"/>
    <property type="molecule type" value="Genomic_DNA"/>
</dbReference>
<dbReference type="PIR" id="E72782">
    <property type="entry name" value="E72782"/>
</dbReference>
<dbReference type="SMR" id="Q9YFK2"/>
<dbReference type="STRING" id="272557.APE_0246.1"/>
<dbReference type="EnsemblBacteria" id="BAA79159">
    <property type="protein sequence ID" value="BAA79159"/>
    <property type="gene ID" value="APE_0246.1"/>
</dbReference>
<dbReference type="KEGG" id="ape:APE_0246.1"/>
<dbReference type="PATRIC" id="fig|272557.25.peg.178"/>
<dbReference type="eggNOG" id="arCOG04075">
    <property type="taxonomic scope" value="Archaea"/>
</dbReference>
<dbReference type="UniPathway" id="UPA00245"/>
<dbReference type="Proteomes" id="UP000002518">
    <property type="component" value="Chromosome"/>
</dbReference>
<dbReference type="GO" id="GO:0036381">
    <property type="term" value="F:pyridoxal 5'-phosphate synthase (glutamine hydrolysing) activity"/>
    <property type="evidence" value="ECO:0007669"/>
    <property type="project" value="UniProtKB-UniRule"/>
</dbReference>
<dbReference type="GO" id="GO:0006520">
    <property type="term" value="P:amino acid metabolic process"/>
    <property type="evidence" value="ECO:0007669"/>
    <property type="project" value="TreeGrafter"/>
</dbReference>
<dbReference type="GO" id="GO:0042823">
    <property type="term" value="P:pyridoxal phosphate biosynthetic process"/>
    <property type="evidence" value="ECO:0007669"/>
    <property type="project" value="UniProtKB-UniRule"/>
</dbReference>
<dbReference type="GO" id="GO:0008615">
    <property type="term" value="P:pyridoxine biosynthetic process"/>
    <property type="evidence" value="ECO:0007669"/>
    <property type="project" value="TreeGrafter"/>
</dbReference>
<dbReference type="CDD" id="cd04727">
    <property type="entry name" value="pdxS"/>
    <property type="match status" value="1"/>
</dbReference>
<dbReference type="FunFam" id="3.20.20.70:FF:000001">
    <property type="entry name" value="Pyridoxine biosynthesis protein PDX1"/>
    <property type="match status" value="1"/>
</dbReference>
<dbReference type="Gene3D" id="3.20.20.70">
    <property type="entry name" value="Aldolase class I"/>
    <property type="match status" value="1"/>
</dbReference>
<dbReference type="HAMAP" id="MF_01824">
    <property type="entry name" value="PdxS"/>
    <property type="match status" value="1"/>
</dbReference>
<dbReference type="InterPro" id="IPR013785">
    <property type="entry name" value="Aldolase_TIM"/>
</dbReference>
<dbReference type="InterPro" id="IPR001852">
    <property type="entry name" value="PdxS/SNZ"/>
</dbReference>
<dbReference type="InterPro" id="IPR033755">
    <property type="entry name" value="PdxS/SNZ_N"/>
</dbReference>
<dbReference type="InterPro" id="IPR011060">
    <property type="entry name" value="RibuloseP-bd_barrel"/>
</dbReference>
<dbReference type="NCBIfam" id="NF003215">
    <property type="entry name" value="PRK04180.1"/>
    <property type="match status" value="1"/>
</dbReference>
<dbReference type="PANTHER" id="PTHR31829">
    <property type="entry name" value="PYRIDOXAL 5'-PHOSPHATE SYNTHASE SUBUNIT SNZ1-RELATED"/>
    <property type="match status" value="1"/>
</dbReference>
<dbReference type="PANTHER" id="PTHR31829:SF0">
    <property type="entry name" value="PYRIDOXAL 5'-PHOSPHATE SYNTHASE SUBUNIT SNZ1-RELATED"/>
    <property type="match status" value="1"/>
</dbReference>
<dbReference type="Pfam" id="PF01680">
    <property type="entry name" value="SOR_SNZ"/>
    <property type="match status" value="1"/>
</dbReference>
<dbReference type="PIRSF" id="PIRSF029271">
    <property type="entry name" value="Pdx1"/>
    <property type="match status" value="1"/>
</dbReference>
<dbReference type="SUPFAM" id="SSF51366">
    <property type="entry name" value="Ribulose-phoshate binding barrel"/>
    <property type="match status" value="1"/>
</dbReference>
<dbReference type="PROSITE" id="PS01235">
    <property type="entry name" value="PDXS_SNZ_1"/>
    <property type="match status" value="1"/>
</dbReference>
<dbReference type="PROSITE" id="PS51129">
    <property type="entry name" value="PDXS_SNZ_2"/>
    <property type="match status" value="1"/>
</dbReference>
<gene>
    <name evidence="1" type="primary">pdxS</name>
    <name type="ordered locus">APE_0246.1</name>
</gene>